<proteinExistence type="inferred from homology"/>
<dbReference type="EMBL" id="AE017262">
    <property type="protein sequence ID" value="AAT04599.1"/>
    <property type="molecule type" value="Genomic_DNA"/>
</dbReference>
<dbReference type="RefSeq" id="WP_003728307.1">
    <property type="nucleotide sequence ID" value="NC_002973.6"/>
</dbReference>
<dbReference type="SMR" id="Q71YL5"/>
<dbReference type="KEGG" id="lmf:LMOf2365_1829"/>
<dbReference type="HOGENOM" id="CLU_129218_1_0_9"/>
<dbReference type="Gene3D" id="1.10.10.10">
    <property type="entry name" value="Winged helix-like DNA-binding domain superfamily/Winged helix DNA-binding domain"/>
    <property type="match status" value="1"/>
</dbReference>
<dbReference type="HAMAP" id="MF_00245">
    <property type="entry name" value="UPF0122"/>
    <property type="match status" value="1"/>
</dbReference>
<dbReference type="InterPro" id="IPR013324">
    <property type="entry name" value="RNA_pol_sigma_r3/r4-like"/>
</dbReference>
<dbReference type="InterPro" id="IPR007394">
    <property type="entry name" value="UPF0122"/>
</dbReference>
<dbReference type="InterPro" id="IPR054831">
    <property type="entry name" value="UPF0122_fam_protein"/>
</dbReference>
<dbReference type="InterPro" id="IPR036388">
    <property type="entry name" value="WH-like_DNA-bd_sf"/>
</dbReference>
<dbReference type="NCBIfam" id="NF001068">
    <property type="entry name" value="PRK00118.1-4"/>
    <property type="match status" value="1"/>
</dbReference>
<dbReference type="NCBIfam" id="NF001069">
    <property type="entry name" value="PRK00118.1-5"/>
    <property type="match status" value="1"/>
</dbReference>
<dbReference type="NCBIfam" id="NF001070">
    <property type="entry name" value="PRK00118.1-6"/>
    <property type="match status" value="1"/>
</dbReference>
<dbReference type="NCBIfam" id="NF045758">
    <property type="entry name" value="YlxM"/>
    <property type="match status" value="1"/>
</dbReference>
<dbReference type="PANTHER" id="PTHR40083">
    <property type="entry name" value="UPF0122 PROTEIN CBO2450/CLC_2298"/>
    <property type="match status" value="1"/>
</dbReference>
<dbReference type="PANTHER" id="PTHR40083:SF1">
    <property type="entry name" value="UPF0122 PROTEIN YLXM"/>
    <property type="match status" value="1"/>
</dbReference>
<dbReference type="Pfam" id="PF04297">
    <property type="entry name" value="UPF0122"/>
    <property type="match status" value="1"/>
</dbReference>
<dbReference type="SUPFAM" id="SSF88659">
    <property type="entry name" value="Sigma3 and sigma4 domains of RNA polymerase sigma factors"/>
    <property type="match status" value="1"/>
</dbReference>
<accession>Q71YL5</accession>
<sequence length="110" mass="13392">MFEKTNRMNLLFDFYQELLTTKQKAYVSFYYLDDYSLGEIAEEFEVSRQAIYDNIKRTEESLEKYEEKLGMLKKYQQREKLFSQLEAQLTKKNFLDEQVKDTLEQLKNID</sequence>
<feature type="chain" id="PRO_0000211870" description="UPF0122 protein LMOf2365_1829">
    <location>
        <begin position="1"/>
        <end position="110"/>
    </location>
</feature>
<gene>
    <name type="ordered locus">LMOf2365_1829</name>
</gene>
<organism>
    <name type="scientific">Listeria monocytogenes serotype 4b (strain F2365)</name>
    <dbReference type="NCBI Taxonomy" id="265669"/>
    <lineage>
        <taxon>Bacteria</taxon>
        <taxon>Bacillati</taxon>
        <taxon>Bacillota</taxon>
        <taxon>Bacilli</taxon>
        <taxon>Bacillales</taxon>
        <taxon>Listeriaceae</taxon>
        <taxon>Listeria</taxon>
    </lineage>
</organism>
<comment type="function">
    <text evidence="1">Might take part in the signal recognition particle (SRP) pathway. This is inferred from the conservation of its genetic proximity to ftsY/ffh. May be a regulatory protein.</text>
</comment>
<comment type="similarity">
    <text evidence="1">Belongs to the UPF0122 family.</text>
</comment>
<protein>
    <recommendedName>
        <fullName evidence="1">UPF0122 protein LMOf2365_1829</fullName>
    </recommendedName>
</protein>
<name>Y1829_LISMF</name>
<reference key="1">
    <citation type="journal article" date="2004" name="Nucleic Acids Res.">
        <title>Whole genome comparisons of serotype 4b and 1/2a strains of the food-borne pathogen Listeria monocytogenes reveal new insights into the core genome components of this species.</title>
        <authorList>
            <person name="Nelson K.E."/>
            <person name="Fouts D.E."/>
            <person name="Mongodin E.F."/>
            <person name="Ravel J."/>
            <person name="DeBoy R.T."/>
            <person name="Kolonay J.F."/>
            <person name="Rasko D.A."/>
            <person name="Angiuoli S.V."/>
            <person name="Gill S.R."/>
            <person name="Paulsen I.T."/>
            <person name="Peterson J.D."/>
            <person name="White O."/>
            <person name="Nelson W.C."/>
            <person name="Nierman W.C."/>
            <person name="Beanan M.J."/>
            <person name="Brinkac L.M."/>
            <person name="Daugherty S.C."/>
            <person name="Dodson R.J."/>
            <person name="Durkin A.S."/>
            <person name="Madupu R."/>
            <person name="Haft D.H."/>
            <person name="Selengut J."/>
            <person name="Van Aken S.E."/>
            <person name="Khouri H.M."/>
            <person name="Fedorova N."/>
            <person name="Forberger H.A."/>
            <person name="Tran B."/>
            <person name="Kathariou S."/>
            <person name="Wonderling L.D."/>
            <person name="Uhlich G.A."/>
            <person name="Bayles D.O."/>
            <person name="Luchansky J.B."/>
            <person name="Fraser C.M."/>
        </authorList>
    </citation>
    <scope>NUCLEOTIDE SEQUENCE [LARGE SCALE GENOMIC DNA]</scope>
    <source>
        <strain>F2365</strain>
    </source>
</reference>
<evidence type="ECO:0000255" key="1">
    <source>
        <dbReference type="HAMAP-Rule" id="MF_00245"/>
    </source>
</evidence>